<proteinExistence type="inferred from homology"/>
<protein>
    <recommendedName>
        <fullName evidence="1">Probable transcriptional regulatory protein ABO_0750</fullName>
    </recommendedName>
</protein>
<organism>
    <name type="scientific">Alcanivorax borkumensis (strain ATCC 700651 / DSM 11573 / NCIMB 13689 / SK2)</name>
    <dbReference type="NCBI Taxonomy" id="393595"/>
    <lineage>
        <taxon>Bacteria</taxon>
        <taxon>Pseudomonadati</taxon>
        <taxon>Pseudomonadota</taxon>
        <taxon>Gammaproteobacteria</taxon>
        <taxon>Oceanospirillales</taxon>
        <taxon>Alcanivoracaceae</taxon>
        <taxon>Alcanivorax</taxon>
    </lineage>
</organism>
<sequence>MAGHSKWANIKHRKAAQDAKRGKIFTKLIRELTVAAKMGGGEPNDNPRLRAAIDKALGQNMTRDTIDRAVKRGAGGDDDGSMDEITYEGYGKGGVAVLVETMTDNVNRTVAEVRHAFSKFGGNLGTSGSVAFLFTKRGEIFFEPGVDEEKLMEVALEAGAEDVEEMGDDGFLVITTPDKSFGEVVDSLRAAGLEFAEAEVTMHPSTEAEMDTDTAETVQKMIDMLEDLDDVQNVYTNASWPAPQEEE</sequence>
<keyword id="KW-0963">Cytoplasm</keyword>
<keyword id="KW-0238">DNA-binding</keyword>
<keyword id="KW-1185">Reference proteome</keyword>
<keyword id="KW-0804">Transcription</keyword>
<keyword id="KW-0805">Transcription regulation</keyword>
<name>Y750_ALCBS</name>
<feature type="chain" id="PRO_0000257028" description="Probable transcriptional regulatory protein ABO_0750">
    <location>
        <begin position="1"/>
        <end position="247"/>
    </location>
</feature>
<gene>
    <name type="ordered locus">ABO_0750</name>
</gene>
<evidence type="ECO:0000255" key="1">
    <source>
        <dbReference type="HAMAP-Rule" id="MF_00693"/>
    </source>
</evidence>
<dbReference type="EMBL" id="AM286690">
    <property type="protein sequence ID" value="CAL16198.1"/>
    <property type="molecule type" value="Genomic_DNA"/>
</dbReference>
<dbReference type="RefSeq" id="WP_011588034.1">
    <property type="nucleotide sequence ID" value="NC_008260.1"/>
</dbReference>
<dbReference type="SMR" id="Q0VRK0"/>
<dbReference type="STRING" id="393595.ABO_0750"/>
<dbReference type="KEGG" id="abo:ABO_0750"/>
<dbReference type="eggNOG" id="COG0217">
    <property type="taxonomic scope" value="Bacteria"/>
</dbReference>
<dbReference type="HOGENOM" id="CLU_062974_2_2_6"/>
<dbReference type="OrthoDB" id="9781053at2"/>
<dbReference type="Proteomes" id="UP000008871">
    <property type="component" value="Chromosome"/>
</dbReference>
<dbReference type="GO" id="GO:0005829">
    <property type="term" value="C:cytosol"/>
    <property type="evidence" value="ECO:0007669"/>
    <property type="project" value="TreeGrafter"/>
</dbReference>
<dbReference type="GO" id="GO:0003677">
    <property type="term" value="F:DNA binding"/>
    <property type="evidence" value="ECO:0007669"/>
    <property type="project" value="UniProtKB-UniRule"/>
</dbReference>
<dbReference type="GO" id="GO:0006355">
    <property type="term" value="P:regulation of DNA-templated transcription"/>
    <property type="evidence" value="ECO:0007669"/>
    <property type="project" value="UniProtKB-UniRule"/>
</dbReference>
<dbReference type="FunFam" id="1.10.10.200:FF:000001">
    <property type="entry name" value="Probable transcriptional regulatory protein YebC"/>
    <property type="match status" value="1"/>
</dbReference>
<dbReference type="FunFam" id="3.30.70.980:FF:000002">
    <property type="entry name" value="Probable transcriptional regulatory protein YebC"/>
    <property type="match status" value="1"/>
</dbReference>
<dbReference type="Gene3D" id="1.10.10.200">
    <property type="match status" value="1"/>
</dbReference>
<dbReference type="Gene3D" id="3.30.70.980">
    <property type="match status" value="2"/>
</dbReference>
<dbReference type="HAMAP" id="MF_00693">
    <property type="entry name" value="Transcrip_reg_TACO1"/>
    <property type="match status" value="1"/>
</dbReference>
<dbReference type="InterPro" id="IPR017856">
    <property type="entry name" value="Integrase-like_N"/>
</dbReference>
<dbReference type="InterPro" id="IPR048300">
    <property type="entry name" value="TACO1_YebC-like_2nd/3rd_dom"/>
</dbReference>
<dbReference type="InterPro" id="IPR049083">
    <property type="entry name" value="TACO1_YebC_N"/>
</dbReference>
<dbReference type="InterPro" id="IPR002876">
    <property type="entry name" value="Transcrip_reg_TACO1-like"/>
</dbReference>
<dbReference type="InterPro" id="IPR026564">
    <property type="entry name" value="Transcrip_reg_TACO1-like_dom3"/>
</dbReference>
<dbReference type="InterPro" id="IPR029072">
    <property type="entry name" value="YebC-like"/>
</dbReference>
<dbReference type="NCBIfam" id="NF001030">
    <property type="entry name" value="PRK00110.1"/>
    <property type="match status" value="1"/>
</dbReference>
<dbReference type="NCBIfam" id="NF009044">
    <property type="entry name" value="PRK12378.1"/>
    <property type="match status" value="1"/>
</dbReference>
<dbReference type="NCBIfam" id="TIGR01033">
    <property type="entry name" value="YebC/PmpR family DNA-binding transcriptional regulator"/>
    <property type="match status" value="1"/>
</dbReference>
<dbReference type="PANTHER" id="PTHR12532:SF6">
    <property type="entry name" value="TRANSCRIPTIONAL REGULATORY PROTEIN YEBC-RELATED"/>
    <property type="match status" value="1"/>
</dbReference>
<dbReference type="PANTHER" id="PTHR12532">
    <property type="entry name" value="TRANSLATIONAL ACTIVATOR OF CYTOCHROME C OXIDASE 1"/>
    <property type="match status" value="1"/>
</dbReference>
<dbReference type="Pfam" id="PF20772">
    <property type="entry name" value="TACO1_YebC_N"/>
    <property type="match status" value="1"/>
</dbReference>
<dbReference type="Pfam" id="PF01709">
    <property type="entry name" value="Transcrip_reg"/>
    <property type="match status" value="1"/>
</dbReference>
<dbReference type="SUPFAM" id="SSF75625">
    <property type="entry name" value="YebC-like"/>
    <property type="match status" value="1"/>
</dbReference>
<reference key="1">
    <citation type="journal article" date="2006" name="Nat. Biotechnol.">
        <title>Genome sequence of the ubiquitous hydrocarbon-degrading marine bacterium Alcanivorax borkumensis.</title>
        <authorList>
            <person name="Schneiker S."/>
            <person name="Martins dos Santos V.A.P."/>
            <person name="Bartels D."/>
            <person name="Bekel T."/>
            <person name="Brecht M."/>
            <person name="Buhrmester J."/>
            <person name="Chernikova T.N."/>
            <person name="Denaro R."/>
            <person name="Ferrer M."/>
            <person name="Gertler C."/>
            <person name="Goesmann A."/>
            <person name="Golyshina O.V."/>
            <person name="Kaminski F."/>
            <person name="Khachane A.N."/>
            <person name="Lang S."/>
            <person name="Linke B."/>
            <person name="McHardy A.C."/>
            <person name="Meyer F."/>
            <person name="Nechitaylo T."/>
            <person name="Puehler A."/>
            <person name="Regenhardt D."/>
            <person name="Rupp O."/>
            <person name="Sabirova J.S."/>
            <person name="Selbitschka W."/>
            <person name="Yakimov M.M."/>
            <person name="Timmis K.N."/>
            <person name="Vorhoelter F.-J."/>
            <person name="Weidner S."/>
            <person name="Kaiser O."/>
            <person name="Golyshin P.N."/>
        </authorList>
    </citation>
    <scope>NUCLEOTIDE SEQUENCE [LARGE SCALE GENOMIC DNA]</scope>
    <source>
        <strain>ATCC 700651 / DSM 11573 / NCIMB 13689 / SK2</strain>
    </source>
</reference>
<accession>Q0VRK0</accession>
<comment type="subcellular location">
    <subcellularLocation>
        <location evidence="1">Cytoplasm</location>
    </subcellularLocation>
</comment>
<comment type="similarity">
    <text evidence="1">Belongs to the TACO1 family.</text>
</comment>